<protein>
    <recommendedName>
        <fullName>rRNA adenine N-6-methyltransferase</fullName>
        <ecNumber>2.1.1.184</ecNumber>
    </recommendedName>
    <alternativeName>
        <fullName>Erythromycin resistance protein</fullName>
    </alternativeName>
    <alternativeName>
        <fullName>Macrolide-lincosamide-streptogramin B resistance protein</fullName>
    </alternativeName>
</protein>
<accession>P13956</accession>
<proteinExistence type="evidence at protein level"/>
<evidence type="ECO:0000255" key="1">
    <source>
        <dbReference type="PROSITE-ProRule" id="PRU01026"/>
    </source>
</evidence>
<evidence type="ECO:0000269" key="2">
    <source>
    </source>
</evidence>
<evidence type="ECO:0000269" key="3">
    <source>
    </source>
</evidence>
<evidence type="ECO:0000305" key="4"/>
<evidence type="ECO:0007829" key="5">
    <source>
        <dbReference type="PDB" id="1QAM"/>
    </source>
</evidence>
<evidence type="ECO:0007829" key="6">
    <source>
        <dbReference type="PDB" id="1QAN"/>
    </source>
</evidence>
<evidence type="ECO:0007829" key="7">
    <source>
        <dbReference type="PDB" id="2ERC"/>
    </source>
</evidence>
<feature type="chain" id="PRO_0000101674" description="rRNA adenine N-6-methyltransferase">
    <location>
        <begin position="1"/>
        <end position="244"/>
    </location>
</feature>
<feature type="binding site">
    <location>
        <position position="11"/>
    </location>
    <ligand>
        <name>S-adenosyl-L-methionine</name>
        <dbReference type="ChEBI" id="CHEBI:59789"/>
    </ligand>
</feature>
<feature type="binding site">
    <location>
        <position position="13"/>
    </location>
    <ligand>
        <name>S-adenosyl-L-methionine</name>
        <dbReference type="ChEBI" id="CHEBI:59789"/>
    </ligand>
</feature>
<feature type="binding site">
    <location>
        <position position="38"/>
    </location>
    <ligand>
        <name>S-adenosyl-L-methionine</name>
        <dbReference type="ChEBI" id="CHEBI:59789"/>
    </ligand>
</feature>
<feature type="binding site">
    <location>
        <position position="59"/>
    </location>
    <ligand>
        <name>S-adenosyl-L-methionine</name>
        <dbReference type="ChEBI" id="CHEBI:59789"/>
    </ligand>
</feature>
<feature type="binding site">
    <location>
        <position position="84"/>
    </location>
    <ligand>
        <name>S-adenosyl-L-methionine</name>
        <dbReference type="ChEBI" id="CHEBI:59789"/>
    </ligand>
</feature>
<feature type="binding site">
    <location>
        <position position="101"/>
    </location>
    <ligand>
        <name>S-adenosyl-L-methionine</name>
        <dbReference type="ChEBI" id="CHEBI:59789"/>
    </ligand>
</feature>
<feature type="mutagenesis site" description="Reduces activity about 3-fold.">
    <original>N</original>
    <variation>A</variation>
    <location>
        <position position="11"/>
    </location>
</feature>
<feature type="mutagenesis site" description="Decreases affinity for S-adenosyl-L-methionine 4-fold. Reduces activity by 90%." evidence="3">
    <original>N</original>
    <variation>A</variation>
    <location>
        <position position="101"/>
    </location>
</feature>
<feature type="mutagenesis site" description="Loss of activity." evidence="3">
    <original>Y</original>
    <variation>A</variation>
    <location>
        <position position="104"/>
    </location>
</feature>
<feature type="mutagenesis site" description="Decreases affinity for S-adenosyl-L-methionine 8-fold. Reduces activity by 99%." evidence="2">
    <original>T</original>
    <variation>A</variation>
    <location>
        <position position="108"/>
    </location>
</feature>
<feature type="mutagenesis site" description="Reduces activity by 90%." evidence="2">
    <original>R</original>
    <variation>A</variation>
    <location>
        <position position="112"/>
    </location>
</feature>
<feature type="mutagenesis site" description="Decreases affinity for S-adenosyl-L-methionine 5-fold. Decreases affinity for RNA 6-fold. Reduces activity by 99%." evidence="2">
    <original>R</original>
    <variation>D</variation>
    <location>
        <position position="112"/>
    </location>
</feature>
<feature type="mutagenesis site" description="Reduces activity by about 80%." evidence="2">
    <original>K</original>
    <variation>A</variation>
    <location>
        <position position="133"/>
    </location>
</feature>
<feature type="mutagenesis site" description="Decreases affinity for S-adenosyl-L-methionine 7-fold. Decreases affinity for RNA about 4-fold. Reduces activity by over 99%. May severely impair protein folding." evidence="2">
    <original>R</original>
    <variation>A</variation>
    <location>
        <position position="134"/>
    </location>
</feature>
<feature type="mutagenesis site" description="Decreases affinity for S-adenosyl-L-methionine 7-fold. Reduces activity by about 85%." evidence="2">
    <original>R</original>
    <variation>A</variation>
    <location>
        <position position="140"/>
    </location>
</feature>
<feature type="mutagenesis site" description="Decreases affinity for S-adenosyl-L-methionine 6-fold. Reduces activity by about 96%." evidence="3">
    <original>P</original>
    <variation>A</variation>
    <location>
        <position position="165"/>
    </location>
</feature>
<feature type="mutagenesis site" description="Decreases affinity for RNA about 6-fold." evidence="3">
    <original>K</original>
    <variation>A</variation>
    <location>
        <position position="166"/>
    </location>
</feature>
<feature type="helix" evidence="5">
    <location>
        <begin position="16"/>
        <end position="23"/>
    </location>
</feature>
<feature type="strand" evidence="5">
    <location>
        <begin position="33"/>
        <end position="37"/>
    </location>
</feature>
<feature type="helix" evidence="5">
    <location>
        <begin position="43"/>
        <end position="51"/>
    </location>
</feature>
<feature type="strand" evidence="5">
    <location>
        <begin position="52"/>
        <end position="58"/>
    </location>
</feature>
<feature type="helix" evidence="5">
    <location>
        <begin position="62"/>
        <end position="71"/>
    </location>
</feature>
<feature type="turn" evidence="5">
    <location>
        <begin position="72"/>
        <end position="74"/>
    </location>
</feature>
<feature type="strand" evidence="5">
    <location>
        <begin position="77"/>
        <end position="81"/>
    </location>
</feature>
<feature type="helix" evidence="5">
    <location>
        <begin position="85"/>
        <end position="87"/>
    </location>
</feature>
<feature type="strand" evidence="6">
    <location>
        <begin position="92"/>
        <end position="94"/>
    </location>
</feature>
<feature type="strand" evidence="5">
    <location>
        <begin position="97"/>
        <end position="101"/>
    </location>
</feature>
<feature type="helix" evidence="5">
    <location>
        <begin position="104"/>
        <end position="106"/>
    </location>
</feature>
<feature type="helix" evidence="5">
    <location>
        <begin position="107"/>
        <end position="116"/>
    </location>
</feature>
<feature type="strand" evidence="5">
    <location>
        <begin position="121"/>
        <end position="128"/>
    </location>
</feature>
<feature type="helix" evidence="5">
    <location>
        <begin position="129"/>
        <end position="135"/>
    </location>
</feature>
<feature type="strand" evidence="7">
    <location>
        <begin position="138"/>
        <end position="140"/>
    </location>
</feature>
<feature type="helix" evidence="5">
    <location>
        <begin position="141"/>
        <end position="146"/>
    </location>
</feature>
<feature type="turn" evidence="5">
    <location>
        <begin position="147"/>
        <end position="149"/>
    </location>
</feature>
<feature type="strand" evidence="5">
    <location>
        <begin position="150"/>
        <end position="158"/>
    </location>
</feature>
<feature type="helix" evidence="5">
    <location>
        <begin position="160"/>
        <end position="162"/>
    </location>
</feature>
<feature type="strand" evidence="5">
    <location>
        <begin position="163"/>
        <end position="165"/>
    </location>
</feature>
<feature type="strand" evidence="5">
    <location>
        <begin position="171"/>
        <end position="178"/>
    </location>
</feature>
<feature type="helix" evidence="5">
    <location>
        <begin position="185"/>
        <end position="187"/>
    </location>
</feature>
<feature type="helix" evidence="5">
    <location>
        <begin position="188"/>
        <end position="199"/>
    </location>
</feature>
<feature type="helix" evidence="5">
    <location>
        <begin position="203"/>
        <end position="205"/>
    </location>
</feature>
<feature type="helix" evidence="5">
    <location>
        <begin position="209"/>
        <end position="219"/>
    </location>
</feature>
<feature type="helix" evidence="5">
    <location>
        <begin position="229"/>
        <end position="242"/>
    </location>
</feature>
<geneLocation type="plasmid">
    <name>pIM13</name>
</geneLocation>
<sequence length="244" mass="28907">MNEKNIKHSQNFITSKHNIDKIMTNIRLNEHDNIFEIGSGKGHFTLELVQRCNFVTAIEIDHKLCKTTENKLVDHDNFQVLNKDILQFKFPKNQSYKIFGNIPYNISTDIIRKIVFDSIADEIYLIVEYGFAKRLLNTKRSLALFLMAEVDISILSMVPREYFHPKPKVNSSLIRLNRKKSRISHKDKQKYNYFVMKWVNKEYKKIFTKNQFNNSLKHAGIDDLNNISFEQFLSLFNSYKLFNK</sequence>
<organism>
    <name type="scientific">Bacillus subtilis</name>
    <dbReference type="NCBI Taxonomy" id="1423"/>
    <lineage>
        <taxon>Bacteria</taxon>
        <taxon>Bacillati</taxon>
        <taxon>Bacillota</taxon>
        <taxon>Bacilli</taxon>
        <taxon>Bacillales</taxon>
        <taxon>Bacillaceae</taxon>
        <taxon>Bacillus</taxon>
    </lineage>
</organism>
<name>ERM_BACIU</name>
<reference key="1">
    <citation type="journal article" date="1986" name="J. Bacteriol.">
        <title>Sequence and properties of pIM13, a macrolide-lincosamide-streptogramin B resistance plasmid from Bacillus subtilis.</title>
        <authorList>
            <person name="Monod M."/>
            <person name="Denoya C."/>
            <person name="Dubnau D."/>
        </authorList>
    </citation>
    <scope>NUCLEOTIDE SEQUENCE [GENOMIC DNA]</scope>
</reference>
<reference key="2">
    <citation type="journal article" date="1995" name="J. Bacteriol.">
        <title>Substrate requirements for ErmC' methyltransferase activity.</title>
        <authorList>
            <person name="Zhong P."/>
            <person name="Pratt S.D."/>
            <person name="Edalji R.P."/>
            <person name="Walter K.A."/>
            <person name="Holzman T.F."/>
            <person name="Shivakumar A.G."/>
            <person name="Katz L."/>
        </authorList>
    </citation>
    <scope>CHARACTERIZATION</scope>
</reference>
<reference key="3">
    <citation type="journal article" date="2003" name="J. Mol. Biol.">
        <title>Mutational analysis defines the roles of conserved amino acid residues in the predicted catalytic pocket of the rRNA:m6A methyltransferase ErmC'.</title>
        <authorList>
            <person name="Maravic G."/>
            <person name="Feder M."/>
            <person name="Pongor S."/>
            <person name="Floegel M."/>
            <person name="Bujnicki J.M."/>
        </authorList>
    </citation>
    <scope>MUTAGENESIS OF ASN-101; TYR-104; PRO-165 AND LYS-166</scope>
    <scope>RNA-BINDING</scope>
    <scope>FUNCTION</scope>
</reference>
<reference key="4">
    <citation type="journal article" date="2003" name="Nucleic Acids Res.">
        <title>Alanine-scanning mutagenesis of the predicted rRNA-binding domain of ErmC' redefines the substrate-binding site and suggests a model for protein-RNA interactions.</title>
        <authorList>
            <person name="Maravic G."/>
            <person name="Bujnicki J.M."/>
            <person name="Feder M."/>
            <person name="Pongor S."/>
            <person name="Floegel M."/>
        </authorList>
    </citation>
    <scope>MUTAGENESIS OF THR-108; ARG-112; LYS-133; ARG-134 AND ARG-140</scope>
    <scope>RNA-BINDING</scope>
    <scope>FUNCTION</scope>
</reference>
<reference key="5">
    <citation type="journal article" date="1998" name="Biochemistry">
        <title>Crystal structure of ErmC', an rRNA methyltransferase which mediates antibiotic resistance in bacteria.</title>
        <authorList>
            <person name="Bussiere D.E."/>
            <person name="Muchmore S.W."/>
            <person name="Dealwis C.G."/>
            <person name="Schluckebier G."/>
            <person name="Nienaber V.L."/>
            <person name="Edalji R.P."/>
            <person name="Walter K.A."/>
            <person name="Ladror U.S."/>
            <person name="Holzman T.F."/>
            <person name="Abad-Zapatero C."/>
        </authorList>
    </citation>
    <scope>X-RAY CRYSTALLOGRAPHY (3.0 ANGSTROMS) OF 10-244</scope>
    <source>
        <strain>BD1109</strain>
    </source>
</reference>
<reference key="6">
    <citation type="journal article" date="1999" name="J. Mol. Biol.">
        <title>The 2.2-A structure of the rRNA methyltransferase ErmC' and its complexes with cofactor and cofactor analogs: implications for the reaction mechanism.</title>
        <authorList>
            <person name="Schluckebier G."/>
            <person name="Zhong P."/>
            <person name="Stewart K.D."/>
            <person name="Kavanaugh T.J."/>
            <person name="Abad-Zapatero C."/>
        </authorList>
    </citation>
    <scope>X-RAY CRYSTALLOGRAPHY (2.2 ANGSTROMS) IN COMPLEXES WITH S-ADENOSYL-L-METHIONINE AND SUBSTRATE ANALOGS</scope>
</reference>
<gene>
    <name type="primary">ermC'</name>
</gene>
<keyword id="KW-0002">3D-structure</keyword>
<keyword id="KW-0046">Antibiotic resistance</keyword>
<keyword id="KW-0489">Methyltransferase</keyword>
<keyword id="KW-0614">Plasmid</keyword>
<keyword id="KW-0694">RNA-binding</keyword>
<keyword id="KW-0949">S-adenosyl-L-methionine</keyword>
<keyword id="KW-0808">Transferase</keyword>
<comment type="function">
    <text evidence="2 3">This protein produces a dimethylation of the adenine residue at position 2085 in 23S rRNA, resulting in reduced affinity between ribosomes and macrolide-lincosamide-streptogramin B antibiotics.</text>
</comment>
<comment type="catalytic activity">
    <reaction>
        <text>adenosine(2085) in 23S rRNA + 2 S-adenosyl-L-methionine = N(6)-dimethyladenosine(2085) in 23S rRNA + 2 S-adenosyl-L-homocysteine + 2 H(+)</text>
        <dbReference type="Rhea" id="RHEA:42784"/>
        <dbReference type="Rhea" id="RHEA-COMP:10237"/>
        <dbReference type="Rhea" id="RHEA-COMP:10238"/>
        <dbReference type="ChEBI" id="CHEBI:15378"/>
        <dbReference type="ChEBI" id="CHEBI:57856"/>
        <dbReference type="ChEBI" id="CHEBI:59789"/>
        <dbReference type="ChEBI" id="CHEBI:74411"/>
        <dbReference type="ChEBI" id="CHEBI:74493"/>
        <dbReference type="EC" id="2.1.1.184"/>
    </reaction>
</comment>
<comment type="similarity">
    <text evidence="1">Belongs to the class I-like SAM-binding methyltransferase superfamily. rRNA adenine N(6)-methyltransferase family.</text>
</comment>
<comment type="caution">
    <text evidence="4">In the genome of Neisseria meningitidis (serogroup B), the gene for this protein is present (NMB0066). It was introduced as part of a construct built to neutralize the virulence of the bacterium.</text>
</comment>
<dbReference type="EC" id="2.1.1.184"/>
<dbReference type="EMBL" id="M13761">
    <property type="protein sequence ID" value="AAA98136.1"/>
    <property type="molecule type" value="Genomic_DNA"/>
</dbReference>
<dbReference type="PIR" id="B25233">
    <property type="entry name" value="B25233"/>
</dbReference>
<dbReference type="RefSeq" id="NP_040407.1">
    <property type="nucleotide sequence ID" value="NC_001376.1"/>
</dbReference>
<dbReference type="PDB" id="1QAM">
    <property type="method" value="X-ray"/>
    <property type="resolution" value="2.20 A"/>
    <property type="chains" value="A=1-244"/>
</dbReference>
<dbReference type="PDB" id="1QAN">
    <property type="method" value="X-ray"/>
    <property type="resolution" value="2.40 A"/>
    <property type="chains" value="A=1-244"/>
</dbReference>
<dbReference type="PDB" id="1QAO">
    <property type="method" value="X-ray"/>
    <property type="resolution" value="2.70 A"/>
    <property type="chains" value="A=1-244"/>
</dbReference>
<dbReference type="PDB" id="1QAQ">
    <property type="method" value="X-ray"/>
    <property type="resolution" value="2.80 A"/>
    <property type="chains" value="A=1-244"/>
</dbReference>
<dbReference type="PDB" id="2ERC">
    <property type="method" value="X-ray"/>
    <property type="resolution" value="3.03 A"/>
    <property type="chains" value="A/B=1-244"/>
</dbReference>
<dbReference type="PDBsum" id="1QAM"/>
<dbReference type="PDBsum" id="1QAN"/>
<dbReference type="PDBsum" id="1QAO"/>
<dbReference type="PDBsum" id="1QAQ"/>
<dbReference type="PDBsum" id="2ERC"/>
<dbReference type="SMR" id="P13956"/>
<dbReference type="BindingDB" id="P13956"/>
<dbReference type="ChEMBL" id="CHEMBL4251"/>
<dbReference type="DrugBank" id="DB01752">
    <property type="generic name" value="S-adenosyl-L-homocysteine"/>
</dbReference>
<dbReference type="DrugBank" id="DB01910">
    <property type="generic name" value="Sinefungin"/>
</dbReference>
<dbReference type="KEGG" id="ag:AAA98136"/>
<dbReference type="BRENDA" id="2.1.1.184">
    <property type="organism ID" value="658"/>
</dbReference>
<dbReference type="SABIO-RK" id="P13956"/>
<dbReference type="EvolutionaryTrace" id="P13956"/>
<dbReference type="PRO" id="PR:P13956"/>
<dbReference type="GO" id="GO:0005829">
    <property type="term" value="C:cytosol"/>
    <property type="evidence" value="ECO:0007669"/>
    <property type="project" value="TreeGrafter"/>
</dbReference>
<dbReference type="GO" id="GO:0052910">
    <property type="term" value="F:23S rRNA (adenine(2085)-N(6))-dimethyltransferase activity"/>
    <property type="evidence" value="ECO:0007669"/>
    <property type="project" value="UniProtKB-EC"/>
</dbReference>
<dbReference type="GO" id="GO:0003723">
    <property type="term" value="F:RNA binding"/>
    <property type="evidence" value="ECO:0007669"/>
    <property type="project" value="UniProtKB-KW"/>
</dbReference>
<dbReference type="GO" id="GO:0000179">
    <property type="term" value="F:rRNA (adenine-N6,N6-)-dimethyltransferase activity"/>
    <property type="evidence" value="ECO:0007669"/>
    <property type="project" value="InterPro"/>
</dbReference>
<dbReference type="GO" id="GO:0046677">
    <property type="term" value="P:response to antibiotic"/>
    <property type="evidence" value="ECO:0007669"/>
    <property type="project" value="UniProtKB-KW"/>
</dbReference>
<dbReference type="CDD" id="cd02440">
    <property type="entry name" value="AdoMet_MTases"/>
    <property type="match status" value="1"/>
</dbReference>
<dbReference type="Gene3D" id="1.10.8.100">
    <property type="entry name" value="Ribosomal RNA adenine dimethylase-like, domain 2"/>
    <property type="match status" value="1"/>
</dbReference>
<dbReference type="Gene3D" id="3.40.50.150">
    <property type="entry name" value="Vaccinia Virus protein VP39"/>
    <property type="match status" value="1"/>
</dbReference>
<dbReference type="InterPro" id="IPR001737">
    <property type="entry name" value="KsgA/Erm"/>
</dbReference>
<dbReference type="InterPro" id="IPR023165">
    <property type="entry name" value="rRNA_Ade_diMease-like_C"/>
</dbReference>
<dbReference type="InterPro" id="IPR020596">
    <property type="entry name" value="rRNA_Ade_Mease_Trfase_CS"/>
</dbReference>
<dbReference type="InterPro" id="IPR020598">
    <property type="entry name" value="rRNA_Ade_methylase_Trfase_N"/>
</dbReference>
<dbReference type="InterPro" id="IPR029063">
    <property type="entry name" value="SAM-dependent_MTases_sf"/>
</dbReference>
<dbReference type="NCBIfam" id="NF000499">
    <property type="entry name" value="Erm23S_rRNA_broad"/>
    <property type="match status" value="1"/>
</dbReference>
<dbReference type="NCBIfam" id="NF012219">
    <property type="entry name" value="erm_C_23S_MT"/>
    <property type="match status" value="1"/>
</dbReference>
<dbReference type="PANTHER" id="PTHR11727">
    <property type="entry name" value="DIMETHYLADENOSINE TRANSFERASE"/>
    <property type="match status" value="1"/>
</dbReference>
<dbReference type="PANTHER" id="PTHR11727:SF7">
    <property type="entry name" value="DIMETHYLADENOSINE TRANSFERASE-RELATED"/>
    <property type="match status" value="1"/>
</dbReference>
<dbReference type="Pfam" id="PF00398">
    <property type="entry name" value="RrnaAD"/>
    <property type="match status" value="1"/>
</dbReference>
<dbReference type="SMART" id="SM00650">
    <property type="entry name" value="rADc"/>
    <property type="match status" value="1"/>
</dbReference>
<dbReference type="SUPFAM" id="SSF53335">
    <property type="entry name" value="S-adenosyl-L-methionine-dependent methyltransferases"/>
    <property type="match status" value="1"/>
</dbReference>
<dbReference type="PROSITE" id="PS01131">
    <property type="entry name" value="RRNA_A_DIMETH"/>
    <property type="match status" value="1"/>
</dbReference>
<dbReference type="PROSITE" id="PS51689">
    <property type="entry name" value="SAM_RNA_A_N6_MT"/>
    <property type="match status" value="1"/>
</dbReference>